<organism>
    <name type="scientific">Escherichia coli (strain K12)</name>
    <dbReference type="NCBI Taxonomy" id="83333"/>
    <lineage>
        <taxon>Bacteria</taxon>
        <taxon>Pseudomonadati</taxon>
        <taxon>Pseudomonadota</taxon>
        <taxon>Gammaproteobacteria</taxon>
        <taxon>Enterobacterales</taxon>
        <taxon>Enterobacteriaceae</taxon>
        <taxon>Escherichia</taxon>
    </lineage>
</organism>
<sequence>MSTQYETQGYTINNAGRRLVVDPITRIEGHMRCEVNINDQNVITNAVSCGTMFRGLEIILQGRDPRDAWAFVERICGVCTGVHALASVYAIEDAIGIKVPDNANIIRNIMLATLWCHDHLVHFYQLAGMDWIDVLDALKADPRKTSELAQSLSSWPKSSPGYFFDVQNRLKKFVEGGQLGIFRNGYWGHPQYKLPPEANLMGFAHYLEALDFQREIVKIHAVFGGKNPHPNWIVGGMPCAINIDESGAVGAVNMERLNLVQSIITRTADFINNVMIPDALAIGQFNKPWSEIGTGLSDKCVLSYGAFPDIANDFGEKSLLMPGGAVINGDFNNVLPVDLVDPQQVQEFVDHAWYRYPNDQVGRHPFDGITDPWYNPGDVKGSDTNIQQLNEQERYSWIKAPRWRGNAMEVGPLARTLIAYHKGDAATVESVDRMMSALNLPLSGIQSTLGRILCRAHEAQWAAGKLQYFFDKLMTNLKNGNLATASTEKWEPATWPTECRGVGFTEAPRGALGHWAAIRDGKIDLYQCVVPTTWNASPRDPKGQIGAYEAALMNTKMAIPEQPLEILRTLHSFDPCLACSTHVLGDDGSELISVQVR</sequence>
<dbReference type="EC" id="1.12.99.6"/>
<dbReference type="EMBL" id="M34825">
    <property type="protein sequence ID" value="AAA23998.1"/>
    <property type="molecule type" value="Genomic_DNA"/>
</dbReference>
<dbReference type="EMBL" id="U00096">
    <property type="protein sequence ID" value="AAC74058.1"/>
    <property type="molecule type" value="Genomic_DNA"/>
</dbReference>
<dbReference type="EMBL" id="AP009048">
    <property type="protein sequence ID" value="BAA35738.2"/>
    <property type="molecule type" value="Genomic_DNA"/>
</dbReference>
<dbReference type="PIR" id="C64838">
    <property type="entry name" value="HQECL"/>
</dbReference>
<dbReference type="RefSeq" id="NP_415492.1">
    <property type="nucleotide sequence ID" value="NC_000913.3"/>
</dbReference>
<dbReference type="RefSeq" id="WP_000107384.1">
    <property type="nucleotide sequence ID" value="NZ_STEB01000006.1"/>
</dbReference>
<dbReference type="PDB" id="3UQY">
    <property type="method" value="X-ray"/>
    <property type="resolution" value="1.47 A"/>
    <property type="chains" value="L/M=1-582"/>
</dbReference>
<dbReference type="PDB" id="3USC">
    <property type="method" value="X-ray"/>
    <property type="resolution" value="2.00 A"/>
    <property type="chains" value="L/M=1-582"/>
</dbReference>
<dbReference type="PDB" id="3USE">
    <property type="method" value="X-ray"/>
    <property type="resolution" value="1.67 A"/>
    <property type="chains" value="L/M=1-582"/>
</dbReference>
<dbReference type="PDB" id="4GD3">
    <property type="method" value="X-ray"/>
    <property type="resolution" value="3.30 A"/>
    <property type="chains" value="J/K/L/M=1-582"/>
</dbReference>
<dbReference type="PDB" id="4UE3">
    <property type="method" value="X-ray"/>
    <property type="resolution" value="1.40 A"/>
    <property type="chains" value="L/M=1-582"/>
</dbReference>
<dbReference type="PDB" id="5A4F">
    <property type="method" value="X-ray"/>
    <property type="resolution" value="1.25 A"/>
    <property type="chains" value="L/M=1-582"/>
</dbReference>
<dbReference type="PDB" id="5A4I">
    <property type="method" value="X-ray"/>
    <property type="resolution" value="1.23 A"/>
    <property type="chains" value="L/M=1-582"/>
</dbReference>
<dbReference type="PDB" id="5A4M">
    <property type="method" value="X-ray"/>
    <property type="resolution" value="1.70 A"/>
    <property type="chains" value="L/M=1-582"/>
</dbReference>
<dbReference type="PDB" id="5ADU">
    <property type="method" value="X-ray"/>
    <property type="resolution" value="1.10 A"/>
    <property type="chains" value="L/M=1-582"/>
</dbReference>
<dbReference type="PDB" id="5JRD">
    <property type="method" value="X-ray"/>
    <property type="resolution" value="1.20 A"/>
    <property type="chains" value="L/M=1-582"/>
</dbReference>
<dbReference type="PDB" id="5LMM">
    <property type="method" value="X-ray"/>
    <property type="resolution" value="1.20 A"/>
    <property type="chains" value="L/M=1-582"/>
</dbReference>
<dbReference type="PDB" id="5LRY">
    <property type="method" value="X-ray"/>
    <property type="resolution" value="1.40 A"/>
    <property type="chains" value="L/M=1-582"/>
</dbReference>
<dbReference type="PDB" id="6FPI">
    <property type="method" value="X-ray"/>
    <property type="resolution" value="1.50 A"/>
    <property type="chains" value="L/M=1-582"/>
</dbReference>
<dbReference type="PDB" id="6FPO">
    <property type="method" value="X-ray"/>
    <property type="resolution" value="1.05 A"/>
    <property type="chains" value="L/M=1-582"/>
</dbReference>
<dbReference type="PDB" id="6FPW">
    <property type="method" value="X-ray"/>
    <property type="resolution" value="1.35 A"/>
    <property type="chains" value="L/M=1-582"/>
</dbReference>
<dbReference type="PDB" id="6G7R">
    <property type="method" value="X-ray"/>
    <property type="resolution" value="1.20 A"/>
    <property type="chains" value="L/M=1-582"/>
</dbReference>
<dbReference type="PDB" id="6G94">
    <property type="method" value="X-ray"/>
    <property type="resolution" value="2.50 A"/>
    <property type="chains" value="J/K/L/M=1-582"/>
</dbReference>
<dbReference type="PDB" id="6GAL">
    <property type="method" value="X-ray"/>
    <property type="resolution" value="1.25 A"/>
    <property type="chains" value="L/M=1-582"/>
</dbReference>
<dbReference type="PDB" id="6RP2">
    <property type="method" value="X-ray"/>
    <property type="resolution" value="1.35 A"/>
    <property type="chains" value="L/M=1-582"/>
</dbReference>
<dbReference type="PDBsum" id="3UQY"/>
<dbReference type="PDBsum" id="3USC"/>
<dbReference type="PDBsum" id="3USE"/>
<dbReference type="PDBsum" id="4GD3"/>
<dbReference type="PDBsum" id="4UE3"/>
<dbReference type="PDBsum" id="5A4F"/>
<dbReference type="PDBsum" id="5A4I"/>
<dbReference type="PDBsum" id="5A4M"/>
<dbReference type="PDBsum" id="5ADU"/>
<dbReference type="PDBsum" id="5JRD"/>
<dbReference type="PDBsum" id="5LMM"/>
<dbReference type="PDBsum" id="5LRY"/>
<dbReference type="PDBsum" id="6FPI"/>
<dbReference type="PDBsum" id="6FPO"/>
<dbReference type="PDBsum" id="6FPW"/>
<dbReference type="PDBsum" id="6G7R"/>
<dbReference type="PDBsum" id="6G94"/>
<dbReference type="PDBsum" id="6GAL"/>
<dbReference type="PDBsum" id="6RP2"/>
<dbReference type="SMR" id="P0ACD8"/>
<dbReference type="BioGRID" id="4260043">
    <property type="interactions" value="23"/>
</dbReference>
<dbReference type="BioGRID" id="849954">
    <property type="interactions" value="1"/>
</dbReference>
<dbReference type="ComplexPortal" id="CPX-281">
    <property type="entry name" value="Hydrogenase-1 complex"/>
</dbReference>
<dbReference type="DIP" id="DIP-36180N"/>
<dbReference type="FunCoup" id="P0ACD8">
    <property type="interactions" value="384"/>
</dbReference>
<dbReference type="IntAct" id="P0ACD8">
    <property type="interactions" value="10"/>
</dbReference>
<dbReference type="STRING" id="511145.b0973"/>
<dbReference type="jPOST" id="P0ACD8"/>
<dbReference type="PaxDb" id="511145-b0973"/>
<dbReference type="EnsemblBacteria" id="AAC74058">
    <property type="protein sequence ID" value="AAC74058"/>
    <property type="gene ID" value="b0973"/>
</dbReference>
<dbReference type="GeneID" id="945580"/>
<dbReference type="KEGG" id="ecj:JW0955"/>
<dbReference type="KEGG" id="eco:b0973"/>
<dbReference type="KEGG" id="ecoc:C3026_05940"/>
<dbReference type="PATRIC" id="fig|1411691.4.peg.1301"/>
<dbReference type="EchoBASE" id="EB0464"/>
<dbReference type="eggNOG" id="COG0374">
    <property type="taxonomic scope" value="Bacteria"/>
</dbReference>
<dbReference type="HOGENOM" id="CLU_030087_0_0_6"/>
<dbReference type="InParanoid" id="P0ACD8"/>
<dbReference type="OMA" id="PRDAGFI"/>
<dbReference type="OrthoDB" id="9761717at2"/>
<dbReference type="PhylomeDB" id="P0ACD8"/>
<dbReference type="BioCyc" id="EcoCyc:HYAB-MONOMER"/>
<dbReference type="BioCyc" id="MetaCyc:HYAB-MONOMER"/>
<dbReference type="BRENDA" id="1.12.99.6">
    <property type="organism ID" value="2026"/>
</dbReference>
<dbReference type="EvolutionaryTrace" id="P0ACD8"/>
<dbReference type="PRO" id="PR:P0ACD8"/>
<dbReference type="Proteomes" id="UP000000625">
    <property type="component" value="Chromosome"/>
</dbReference>
<dbReference type="GO" id="GO:0044569">
    <property type="term" value="C:[Ni-Fe] hydrogenase complex"/>
    <property type="evidence" value="ECO:0000314"/>
    <property type="project" value="EcoCyc"/>
</dbReference>
<dbReference type="GO" id="GO:0016020">
    <property type="term" value="C:membrane"/>
    <property type="evidence" value="ECO:0000314"/>
    <property type="project" value="EcoCyc"/>
</dbReference>
<dbReference type="GO" id="GO:0030288">
    <property type="term" value="C:outer membrane-bounded periplasmic space"/>
    <property type="evidence" value="ECO:0000314"/>
    <property type="project" value="EcoCyc"/>
</dbReference>
<dbReference type="GO" id="GO:0098567">
    <property type="term" value="C:periplasmic side of plasma membrane"/>
    <property type="evidence" value="ECO:0000314"/>
    <property type="project" value="ComplexPortal"/>
</dbReference>
<dbReference type="GO" id="GO:0009055">
    <property type="term" value="F:electron transfer activity"/>
    <property type="evidence" value="ECO:0000314"/>
    <property type="project" value="EcoCyc"/>
</dbReference>
<dbReference type="GO" id="GO:0008901">
    <property type="term" value="F:ferredoxin hydrogenase activity"/>
    <property type="evidence" value="ECO:0007669"/>
    <property type="project" value="InterPro"/>
</dbReference>
<dbReference type="GO" id="GO:0033748">
    <property type="term" value="F:hydrogenase (acceptor) activity"/>
    <property type="evidence" value="ECO:0000305"/>
    <property type="project" value="EcoCyc"/>
</dbReference>
<dbReference type="GO" id="GO:0016151">
    <property type="term" value="F:nickel cation binding"/>
    <property type="evidence" value="ECO:0000314"/>
    <property type="project" value="EcoCyc"/>
</dbReference>
<dbReference type="GO" id="GO:0019645">
    <property type="term" value="P:anaerobic electron transport chain"/>
    <property type="evidence" value="ECO:0000314"/>
    <property type="project" value="ComplexPortal"/>
</dbReference>
<dbReference type="GO" id="GO:0009061">
    <property type="term" value="P:anaerobic respiration"/>
    <property type="evidence" value="ECO:0000314"/>
    <property type="project" value="ComplexPortal"/>
</dbReference>
<dbReference type="GO" id="GO:0009267">
    <property type="term" value="P:cellular response to starvation"/>
    <property type="evidence" value="ECO:0000314"/>
    <property type="project" value="ComplexPortal"/>
</dbReference>
<dbReference type="GO" id="GO:0006113">
    <property type="term" value="P:fermentation"/>
    <property type="evidence" value="ECO:0000314"/>
    <property type="project" value="ComplexPortal"/>
</dbReference>
<dbReference type="GO" id="GO:1902421">
    <property type="term" value="P:hydrogen metabolic process"/>
    <property type="evidence" value="ECO:0000305"/>
    <property type="project" value="EcoCyc"/>
</dbReference>
<dbReference type="FunFam" id="1.10.645.10:FF:000002">
    <property type="entry name" value="Hydrogenase 2 large subunit"/>
    <property type="match status" value="1"/>
</dbReference>
<dbReference type="Gene3D" id="1.10.645.10">
    <property type="entry name" value="Cytochrome-c3 Hydrogenase, chain B"/>
    <property type="match status" value="1"/>
</dbReference>
<dbReference type="InterPro" id="IPR001501">
    <property type="entry name" value="Ni-dep_hyd_lsu"/>
</dbReference>
<dbReference type="InterPro" id="IPR018194">
    <property type="entry name" value="Ni-dep_hyd_lsu_Ni_BS"/>
</dbReference>
<dbReference type="InterPro" id="IPR029014">
    <property type="entry name" value="NiFe-Hase_large"/>
</dbReference>
<dbReference type="InterPro" id="IPR050867">
    <property type="entry name" value="NiFe/NiFeSe_hydrgnase_LSU"/>
</dbReference>
<dbReference type="NCBIfam" id="NF007550">
    <property type="entry name" value="PRK10170.1"/>
    <property type="match status" value="1"/>
</dbReference>
<dbReference type="PANTHER" id="PTHR42958:SF3">
    <property type="entry name" value="HYDROGENASE-1 LARGE CHAIN"/>
    <property type="match status" value="1"/>
</dbReference>
<dbReference type="PANTHER" id="PTHR42958">
    <property type="entry name" value="HYDROGENASE-2 LARGE CHAIN"/>
    <property type="match status" value="1"/>
</dbReference>
<dbReference type="Pfam" id="PF00374">
    <property type="entry name" value="NiFeSe_Hases"/>
    <property type="match status" value="1"/>
</dbReference>
<dbReference type="SUPFAM" id="SSF56762">
    <property type="entry name" value="HydB/Nqo4-like"/>
    <property type="match status" value="1"/>
</dbReference>
<dbReference type="PROSITE" id="PS00507">
    <property type="entry name" value="NI_HGENASE_L_1"/>
    <property type="match status" value="1"/>
</dbReference>
<dbReference type="PROSITE" id="PS00508">
    <property type="entry name" value="NI_HGENASE_L_2"/>
    <property type="match status" value="1"/>
</dbReference>
<reference key="1">
    <citation type="journal article" date="1990" name="J. Bacteriol.">
        <title>Cloning and sequencing of a putative Escherichia coli [NiFe] hydrogenase-1 operon containing six open reading frames.</title>
        <authorList>
            <person name="Menon N.K."/>
            <person name="Robbins J."/>
            <person name="Peck H.D. Jr."/>
            <person name="Chatelus C.Y."/>
            <person name="Choi E.-S."/>
            <person name="Przybyla A.E."/>
        </authorList>
    </citation>
    <scope>NUCLEOTIDE SEQUENCE [GENOMIC DNA]</scope>
    <scope>PROTEIN SEQUENCE OF 1-10</scope>
</reference>
<reference key="2">
    <citation type="journal article" date="1997" name="Science">
        <title>The complete genome sequence of Escherichia coli K-12.</title>
        <authorList>
            <person name="Blattner F.R."/>
            <person name="Plunkett G. III"/>
            <person name="Bloch C.A."/>
            <person name="Perna N.T."/>
            <person name="Burland V."/>
            <person name="Riley M."/>
            <person name="Collado-Vides J."/>
            <person name="Glasner J.D."/>
            <person name="Rode C.K."/>
            <person name="Mayhew G.F."/>
            <person name="Gregor J."/>
            <person name="Davis N.W."/>
            <person name="Kirkpatrick H.A."/>
            <person name="Goeden M.A."/>
            <person name="Rose D.J."/>
            <person name="Mau B."/>
            <person name="Shao Y."/>
        </authorList>
    </citation>
    <scope>NUCLEOTIDE SEQUENCE [LARGE SCALE GENOMIC DNA]</scope>
    <source>
        <strain>K12 / MG1655 / ATCC 47076</strain>
    </source>
</reference>
<reference key="3">
    <citation type="journal article" date="2006" name="Mol. Syst. Biol.">
        <title>Highly accurate genome sequences of Escherichia coli K-12 strains MG1655 and W3110.</title>
        <authorList>
            <person name="Hayashi K."/>
            <person name="Morooka N."/>
            <person name="Yamamoto Y."/>
            <person name="Fujita K."/>
            <person name="Isono K."/>
            <person name="Choi S."/>
            <person name="Ohtsubo E."/>
            <person name="Baba T."/>
            <person name="Wanner B.L."/>
            <person name="Mori H."/>
            <person name="Horiuchi T."/>
        </authorList>
    </citation>
    <scope>NUCLEOTIDE SEQUENCE [LARGE SCALE GENOMIC DNA]</scope>
    <source>
        <strain>K12 / W3110 / ATCC 27325 / DSM 5911</strain>
    </source>
</reference>
<reference key="4">
    <citation type="journal article" date="1996" name="DNA Res.">
        <title>A 718-kb DNA sequence of the Escherichia coli K-12 genome corresponding to the 12.7-28.0 min region on the linkage map.</title>
        <authorList>
            <person name="Oshima T."/>
            <person name="Aiba H."/>
            <person name="Baba T."/>
            <person name="Fujita K."/>
            <person name="Hayashi K."/>
            <person name="Honjo A."/>
            <person name="Ikemoto K."/>
            <person name="Inada T."/>
            <person name="Itoh T."/>
            <person name="Kajihara M."/>
            <person name="Kanai K."/>
            <person name="Kashimoto K."/>
            <person name="Kimura S."/>
            <person name="Kitagawa M."/>
            <person name="Makino K."/>
            <person name="Masuda S."/>
            <person name="Miki T."/>
            <person name="Mizobuchi K."/>
            <person name="Mori H."/>
            <person name="Motomura K."/>
            <person name="Nakamura Y."/>
            <person name="Nashimoto H."/>
            <person name="Nishio Y."/>
            <person name="Saito N."/>
            <person name="Sampei G."/>
            <person name="Seki Y."/>
            <person name="Tagami H."/>
            <person name="Takemoto K."/>
            <person name="Wada C."/>
            <person name="Yamamoto Y."/>
            <person name="Yano M."/>
            <person name="Horiuchi T."/>
        </authorList>
    </citation>
    <scope>NUCLEOTIDE SEQUENCE [GENOMIC DNA] OF 276-597</scope>
    <source>
        <strain>K12 / W3110 / ATCC 27325 / DSM 5911</strain>
    </source>
</reference>
<keyword id="KW-0002">3D-structure</keyword>
<keyword id="KW-1003">Cell membrane</keyword>
<keyword id="KW-0903">Direct protein sequencing</keyword>
<keyword id="KW-0472">Membrane</keyword>
<keyword id="KW-0479">Metal-binding</keyword>
<keyword id="KW-0533">Nickel</keyword>
<keyword id="KW-0560">Oxidoreductase</keyword>
<keyword id="KW-1185">Reference proteome</keyword>
<comment type="function">
    <text>This is one of three E.coli hydrogenases synthesized in response to different physiological conditions. HYD1 is believed to have a role in hydrogen cycling during fermentative growth.</text>
</comment>
<comment type="catalytic activity">
    <reaction>
        <text>H2 + A = AH2</text>
        <dbReference type="Rhea" id="RHEA:12116"/>
        <dbReference type="ChEBI" id="CHEBI:13193"/>
        <dbReference type="ChEBI" id="CHEBI:17499"/>
        <dbReference type="ChEBI" id="CHEBI:18276"/>
        <dbReference type="EC" id="1.12.99.6"/>
    </reaction>
</comment>
<comment type="cofactor">
    <cofactor evidence="1">
        <name>Ni(2+)</name>
        <dbReference type="ChEBI" id="CHEBI:49786"/>
    </cofactor>
    <text evidence="1">Binds 1 nickel ion per subunit.</text>
</comment>
<comment type="subunit">
    <text>Heterodimer of a large and a small subunit.</text>
</comment>
<comment type="interaction">
    <interactant intactId="EBI-851493">
        <id>P0ACD8</id>
    </interactant>
    <interactant intactId="EBI-9124108">
        <id>P69739</id>
        <label>hyaA</label>
    </interactant>
    <organismsDiffer>false</organismsDiffer>
    <experiments>6</experiments>
</comment>
<comment type="interaction">
    <interactant intactId="EBI-851493">
        <id>P0ACD8</id>
    </interactant>
    <interactant intactId="EBI-552940">
        <id>P19930</id>
        <label>hyaD</label>
    </interactant>
    <organismsDiffer>false</organismsDiffer>
    <experiments>3</experiments>
</comment>
<comment type="subcellular location">
    <subcellularLocation>
        <location>Cell membrane</location>
        <topology>Peripheral membrane protein</topology>
    </subcellularLocation>
</comment>
<comment type="similarity">
    <text evidence="3">Belongs to the [NiFe]/[NiFeSe] hydrogenase large subunit family.</text>
</comment>
<proteinExistence type="evidence at protein level"/>
<protein>
    <recommendedName>
        <fullName>Hydrogenase-1 large chain</fullName>
        <shortName>HYD1</shortName>
        <ecNumber>1.12.99.6</ecNumber>
    </recommendedName>
    <alternativeName>
        <fullName>Membrane-bound hydrogenase 1 large subunit</fullName>
    </alternativeName>
    <alternativeName>
        <fullName>NiFe hydrogenase</fullName>
    </alternativeName>
</protein>
<feature type="chain" id="PRO_0000199712" description="Hydrogenase-1 large chain">
    <location>
        <begin position="1"/>
        <end position="597"/>
    </location>
</feature>
<feature type="binding site" evidence="2">
    <location>
        <position position="76"/>
    </location>
    <ligand>
        <name>Ni(2+)</name>
        <dbReference type="ChEBI" id="CHEBI:49786"/>
    </ligand>
</feature>
<feature type="binding site" evidence="2">
    <location>
        <position position="79"/>
    </location>
    <ligand>
        <name>Ni(2+)</name>
        <dbReference type="ChEBI" id="CHEBI:49786"/>
    </ligand>
</feature>
<feature type="binding site" evidence="2">
    <location>
        <position position="576"/>
    </location>
    <ligand>
        <name>Ni(2+)</name>
        <dbReference type="ChEBI" id="CHEBI:49786"/>
    </ligand>
</feature>
<feature type="binding site" evidence="2">
    <location>
        <position position="579"/>
    </location>
    <ligand>
        <name>Ni(2+)</name>
        <dbReference type="ChEBI" id="CHEBI:49786"/>
    </ligand>
</feature>
<feature type="sequence conflict" description="In Ref. 1; AAA23998." evidence="3" ref="1">
    <original>M</original>
    <variation>I</variation>
    <location>
        <position position="52"/>
    </location>
</feature>
<feature type="sequence conflict" description="In Ref. 1; AAA23998." evidence="3" ref="1">
    <original>W</original>
    <variation>R</variation>
    <location>
        <position position="69"/>
    </location>
</feature>
<feature type="strand" evidence="6">
    <location>
        <begin position="4"/>
        <end position="7"/>
    </location>
</feature>
<feature type="strand" evidence="6">
    <location>
        <begin position="10"/>
        <end position="13"/>
    </location>
</feature>
<feature type="strand" evidence="6">
    <location>
        <begin position="16"/>
        <end position="21"/>
    </location>
</feature>
<feature type="strand" evidence="6">
    <location>
        <begin position="26"/>
        <end position="29"/>
    </location>
</feature>
<feature type="strand" evidence="6">
    <location>
        <begin position="31"/>
        <end position="37"/>
    </location>
</feature>
<feature type="strand" evidence="6">
    <location>
        <begin position="41"/>
        <end position="50"/>
    </location>
</feature>
<feature type="helix" evidence="6">
    <location>
        <begin position="56"/>
        <end position="59"/>
    </location>
</feature>
<feature type="turn" evidence="6">
    <location>
        <begin position="60"/>
        <end position="62"/>
    </location>
</feature>
<feature type="helix" evidence="6">
    <location>
        <begin position="65"/>
        <end position="67"/>
    </location>
</feature>
<feature type="helix" evidence="6">
    <location>
        <begin position="68"/>
        <end position="73"/>
    </location>
</feature>
<feature type="strand" evidence="6">
    <location>
        <begin position="77"/>
        <end position="79"/>
    </location>
</feature>
<feature type="helix" evidence="6">
    <location>
        <begin position="82"/>
        <end position="95"/>
    </location>
</feature>
<feature type="helix" evidence="6">
    <location>
        <begin position="101"/>
        <end position="125"/>
    </location>
</feature>
<feature type="helix" evidence="6">
    <location>
        <begin position="128"/>
        <end position="130"/>
    </location>
</feature>
<feature type="helix" evidence="6">
    <location>
        <begin position="135"/>
        <end position="139"/>
    </location>
</feature>
<feature type="helix" evidence="6">
    <location>
        <begin position="142"/>
        <end position="152"/>
    </location>
</feature>
<feature type="helix" evidence="6">
    <location>
        <begin position="160"/>
        <end position="175"/>
    </location>
</feature>
<feature type="helix" evidence="6">
    <location>
        <begin position="180"/>
        <end position="182"/>
    </location>
</feature>
<feature type="helix" evidence="6">
    <location>
        <begin position="196"/>
        <end position="216"/>
    </location>
</feature>
<feature type="helix" evidence="6">
    <location>
        <begin position="218"/>
        <end position="224"/>
    </location>
</feature>
<feature type="strand" evidence="6">
    <location>
        <begin position="225"/>
        <end position="229"/>
    </location>
</feature>
<feature type="strand" evidence="6">
    <location>
        <begin position="243"/>
        <end position="245"/>
    </location>
</feature>
<feature type="helix" evidence="6">
    <location>
        <begin position="248"/>
        <end position="250"/>
    </location>
</feature>
<feature type="helix" evidence="6">
    <location>
        <begin position="254"/>
        <end position="273"/>
    </location>
</feature>
<feature type="helix" evidence="6">
    <location>
        <begin position="275"/>
        <end position="285"/>
    </location>
</feature>
<feature type="helix" evidence="6">
    <location>
        <begin position="287"/>
        <end position="291"/>
    </location>
</feature>
<feature type="helix" evidence="6">
    <location>
        <begin position="295"/>
        <end position="298"/>
    </location>
</feature>
<feature type="strand" evidence="6">
    <location>
        <begin position="301"/>
        <end position="303"/>
    </location>
</feature>
<feature type="strand" evidence="6">
    <location>
        <begin position="306"/>
        <end position="310"/>
    </location>
</feature>
<feature type="turn" evidence="6">
    <location>
        <begin position="316"/>
        <end position="318"/>
    </location>
</feature>
<feature type="strand" evidence="6">
    <location>
        <begin position="319"/>
        <end position="321"/>
    </location>
</feature>
<feature type="strand" evidence="6">
    <location>
        <begin position="324"/>
        <end position="326"/>
    </location>
</feature>
<feature type="strand" evidence="6">
    <location>
        <begin position="344"/>
        <end position="348"/>
    </location>
</feature>
<feature type="strand" evidence="6">
    <location>
        <begin position="352"/>
        <end position="354"/>
    </location>
</feature>
<feature type="helix" evidence="6">
    <location>
        <begin position="365"/>
        <end position="367"/>
    </location>
</feature>
<feature type="strand" evidence="6">
    <location>
        <begin position="380"/>
        <end position="382"/>
    </location>
</feature>
<feature type="strand" evidence="5">
    <location>
        <begin position="385"/>
        <end position="388"/>
    </location>
</feature>
<feature type="strand" evidence="6">
    <location>
        <begin position="400"/>
        <end position="403"/>
    </location>
</feature>
<feature type="helix" evidence="6">
    <location>
        <begin position="412"/>
        <end position="421"/>
    </location>
</feature>
<feature type="helix" evidence="6">
    <location>
        <begin position="425"/>
        <end position="437"/>
    </location>
</feature>
<feature type="helix" evidence="6">
    <location>
        <begin position="442"/>
        <end position="445"/>
    </location>
</feature>
<feature type="helix" evidence="6">
    <location>
        <begin position="448"/>
        <end position="478"/>
    </location>
</feature>
<feature type="helix" evidence="6">
    <location>
        <begin position="492"/>
        <end position="494"/>
    </location>
</feature>
<feature type="strand" evidence="6">
    <location>
        <begin position="497"/>
        <end position="507"/>
    </location>
</feature>
<feature type="strand" evidence="6">
    <location>
        <begin position="510"/>
        <end position="519"/>
    </location>
</feature>
<feature type="strand" evidence="6">
    <location>
        <begin position="522"/>
        <end position="529"/>
    </location>
</feature>
<feature type="helix" evidence="6">
    <location>
        <begin position="531"/>
        <end position="535"/>
    </location>
</feature>
<feature type="helix" evidence="6">
    <location>
        <begin position="547"/>
        <end position="552"/>
    </location>
</feature>
<feature type="strand" evidence="4">
    <location>
        <begin position="560"/>
        <end position="562"/>
    </location>
</feature>
<feature type="helix" evidence="6">
    <location>
        <begin position="564"/>
        <end position="572"/>
    </location>
</feature>
<feature type="helix" evidence="6">
    <location>
        <begin position="577"/>
        <end position="581"/>
    </location>
</feature>
<accession>P0ACD8</accession>
<accession>P19927</accession>
<accession>P78056</accession>
<evidence type="ECO:0000250" key="1"/>
<evidence type="ECO:0000255" key="2"/>
<evidence type="ECO:0000305" key="3"/>
<evidence type="ECO:0007829" key="4">
    <source>
        <dbReference type="PDB" id="4GD3"/>
    </source>
</evidence>
<evidence type="ECO:0007829" key="5">
    <source>
        <dbReference type="PDB" id="5ADU"/>
    </source>
</evidence>
<evidence type="ECO:0007829" key="6">
    <source>
        <dbReference type="PDB" id="6FPO"/>
    </source>
</evidence>
<gene>
    <name type="primary">hyaB</name>
    <name type="ordered locus">b0973</name>
    <name type="ordered locus">JW0955</name>
</gene>
<name>MBHL_ECOLI</name>